<feature type="chain" id="PRO_0000328304" description="Pyrroline-5-carboxylate reductase 1">
    <location>
        <begin position="1"/>
        <end position="551"/>
    </location>
</feature>
<feature type="region of interest" description="Disordered" evidence="2">
    <location>
        <begin position="279"/>
        <end position="551"/>
    </location>
</feature>
<feature type="compositionally biased region" description="Low complexity" evidence="2">
    <location>
        <begin position="282"/>
        <end position="298"/>
    </location>
</feature>
<feature type="compositionally biased region" description="Low complexity" evidence="2">
    <location>
        <begin position="306"/>
        <end position="342"/>
    </location>
</feature>
<feature type="compositionally biased region" description="Low complexity" evidence="2">
    <location>
        <begin position="383"/>
        <end position="415"/>
    </location>
</feature>
<feature type="compositionally biased region" description="Low complexity" evidence="2">
    <location>
        <begin position="424"/>
        <end position="441"/>
    </location>
</feature>
<feature type="compositionally biased region" description="Low complexity" evidence="2">
    <location>
        <begin position="448"/>
        <end position="475"/>
    </location>
</feature>
<feature type="compositionally biased region" description="Low complexity" evidence="2">
    <location>
        <begin position="487"/>
        <end position="496"/>
    </location>
</feature>
<feature type="compositionally biased region" description="Low complexity" evidence="2">
    <location>
        <begin position="503"/>
        <end position="520"/>
    </location>
</feature>
<feature type="compositionally biased region" description="Basic and acidic residues" evidence="2">
    <location>
        <begin position="537"/>
        <end position="551"/>
    </location>
</feature>
<sequence>MKLYDNGVAVLGCGNLGNAIAKGLVASKQFKSNQIVLTKRNLSTIEPLKREGYHVTTSNHDAVSRCKIVIVCVVPAQLDDLLDSIKQSVTENHIIISVVSGASIEDIRSHLEKDVPIVRAMPNTAIQHCQSMTCLAIRSSHQKSTNSPSDKAKDNALEVAKKIFNCLGMSIVLSEEQIVPATALCACGIAFFCRAIRAAAQGGCEIGFHAEDAIRIAAQTAKGAATLLLENNFHPEYEIDKVTTPQGCTIAGLNQMEHAGFSSAMIKGIVTSSDKAASLYTQKQQNKKQQQLKQQQHQQHQHQQHQQHQQQVQQQEPHQYQQQQQQSHQQSQYNQGHNYGHQNQHHHNHDDQHQNYYNQDQKRRNNRKHRSNENYDNHHHHNQQYQQHQQPTQQESQEQTQQPEQTQSTNQSNQRRNSESRNGKSPQKQPQKQSQVQQPSSTTENTDQQQQQQPPQEQQQQQEQPQQPQEQQQQPNVVDEAERPKEQQQQPQQQQQTIDKKGYNNNRRGGRHYSYNNNYNSHHHRHNGINKNSSSMYHDEKRHEVKTEQIN</sequence>
<organism>
    <name type="scientific">Dictyostelium discoideum</name>
    <name type="common">Social amoeba</name>
    <dbReference type="NCBI Taxonomy" id="44689"/>
    <lineage>
        <taxon>Eukaryota</taxon>
        <taxon>Amoebozoa</taxon>
        <taxon>Evosea</taxon>
        <taxon>Eumycetozoa</taxon>
        <taxon>Dictyostelia</taxon>
        <taxon>Dictyosteliales</taxon>
        <taxon>Dictyosteliaceae</taxon>
        <taxon>Dictyostelium</taxon>
    </lineage>
</organism>
<gene>
    <name type="primary">pycr1</name>
    <name type="ORF">DDB_G0288671</name>
</gene>
<evidence type="ECO:0000250" key="1"/>
<evidence type="ECO:0000256" key="2">
    <source>
        <dbReference type="SAM" id="MobiDB-lite"/>
    </source>
</evidence>
<evidence type="ECO:0000305" key="3"/>
<keyword id="KW-0028">Amino-acid biosynthesis</keyword>
<keyword id="KW-0521">NADP</keyword>
<keyword id="KW-0560">Oxidoreductase</keyword>
<keyword id="KW-0641">Proline biosynthesis</keyword>
<keyword id="KW-1185">Reference proteome</keyword>
<proteinExistence type="inferred from homology"/>
<accession>Q54IL7</accession>
<comment type="catalytic activity">
    <reaction>
        <text>L-proline + NADP(+) = (S)-1-pyrroline-5-carboxylate + NADPH + 2 H(+)</text>
        <dbReference type="Rhea" id="RHEA:14109"/>
        <dbReference type="ChEBI" id="CHEBI:15378"/>
        <dbReference type="ChEBI" id="CHEBI:17388"/>
        <dbReference type="ChEBI" id="CHEBI:57783"/>
        <dbReference type="ChEBI" id="CHEBI:58349"/>
        <dbReference type="ChEBI" id="CHEBI:60039"/>
        <dbReference type="EC" id="1.5.1.2"/>
    </reaction>
</comment>
<comment type="catalytic activity">
    <reaction>
        <text>L-proline + NAD(+) = (S)-1-pyrroline-5-carboxylate + NADH + 2 H(+)</text>
        <dbReference type="Rhea" id="RHEA:14105"/>
        <dbReference type="ChEBI" id="CHEBI:15378"/>
        <dbReference type="ChEBI" id="CHEBI:17388"/>
        <dbReference type="ChEBI" id="CHEBI:57540"/>
        <dbReference type="ChEBI" id="CHEBI:57945"/>
        <dbReference type="ChEBI" id="CHEBI:60039"/>
        <dbReference type="EC" id="1.5.1.2"/>
    </reaction>
</comment>
<comment type="pathway">
    <text>Amino-acid biosynthesis; L-proline biosynthesis; L-proline from L-glutamate 5-semialdehyde: step 1/1.</text>
</comment>
<comment type="subunit">
    <text evidence="1">Homodecamer; composed of 5 homodimers.</text>
</comment>
<comment type="similarity">
    <text evidence="3">Belongs to the pyrroline-5-carboxylate reductase family.</text>
</comment>
<protein>
    <recommendedName>
        <fullName>Pyrroline-5-carboxylate reductase 1</fullName>
        <shortName>P5C reductase 1</shortName>
        <shortName>P5CR 1</shortName>
        <ecNumber>1.5.1.2</ecNumber>
    </recommendedName>
</protein>
<name>P5CR1_DICDI</name>
<dbReference type="EC" id="1.5.1.2"/>
<dbReference type="EMBL" id="AAFI02000119">
    <property type="protein sequence ID" value="EAL63112.1"/>
    <property type="molecule type" value="Genomic_DNA"/>
</dbReference>
<dbReference type="RefSeq" id="XP_636614.1">
    <property type="nucleotide sequence ID" value="XM_631522.1"/>
</dbReference>
<dbReference type="SMR" id="Q54IL7"/>
<dbReference type="FunCoup" id="Q54IL7">
    <property type="interactions" value="61"/>
</dbReference>
<dbReference type="STRING" id="44689.Q54IL7"/>
<dbReference type="PaxDb" id="44689-DDB0232206"/>
<dbReference type="EnsemblProtists" id="EAL63112">
    <property type="protein sequence ID" value="EAL63112"/>
    <property type="gene ID" value="DDB_G0288671"/>
</dbReference>
<dbReference type="GeneID" id="8626742"/>
<dbReference type="KEGG" id="ddi:DDB_G0288671"/>
<dbReference type="dictyBase" id="DDB_G0288671"/>
<dbReference type="VEuPathDB" id="AmoebaDB:DDB_G0288671"/>
<dbReference type="eggNOG" id="KOG3124">
    <property type="taxonomic scope" value="Eukaryota"/>
</dbReference>
<dbReference type="HOGENOM" id="CLU_494711_0_0_1"/>
<dbReference type="InParanoid" id="Q54IL7"/>
<dbReference type="OMA" id="CQSMTCL"/>
<dbReference type="PhylomeDB" id="Q54IL7"/>
<dbReference type="Reactome" id="R-DDI-8964539">
    <property type="pathway name" value="Glutamate and glutamine metabolism"/>
</dbReference>
<dbReference type="UniPathway" id="UPA00098">
    <property type="reaction ID" value="UER00361"/>
</dbReference>
<dbReference type="PRO" id="PR:Q54IL7"/>
<dbReference type="Proteomes" id="UP000002195">
    <property type="component" value="Chromosome 5"/>
</dbReference>
<dbReference type="GO" id="GO:0004735">
    <property type="term" value="F:pyrroline-5-carboxylate reductase activity"/>
    <property type="evidence" value="ECO:0000318"/>
    <property type="project" value="GO_Central"/>
</dbReference>
<dbReference type="GO" id="GO:0055129">
    <property type="term" value="P:L-proline biosynthetic process"/>
    <property type="evidence" value="ECO:0000318"/>
    <property type="project" value="GO_Central"/>
</dbReference>
<dbReference type="FunFam" id="1.10.3730.10:FF:000004">
    <property type="entry name" value="Pyrroline-5-carboxylate reductase"/>
    <property type="match status" value="1"/>
</dbReference>
<dbReference type="FunFam" id="3.40.50.720:FF:000866">
    <property type="entry name" value="Pyrroline-5-carboxylate reductase"/>
    <property type="match status" value="1"/>
</dbReference>
<dbReference type="Gene3D" id="3.40.50.720">
    <property type="entry name" value="NAD(P)-binding Rossmann-like Domain"/>
    <property type="match status" value="1"/>
</dbReference>
<dbReference type="Gene3D" id="1.10.3730.10">
    <property type="entry name" value="ProC C-terminal domain-like"/>
    <property type="match status" value="1"/>
</dbReference>
<dbReference type="HAMAP" id="MF_01925">
    <property type="entry name" value="P5C_reductase"/>
    <property type="match status" value="1"/>
</dbReference>
<dbReference type="InterPro" id="IPR008927">
    <property type="entry name" value="6-PGluconate_DH-like_C_sf"/>
</dbReference>
<dbReference type="InterPro" id="IPR036291">
    <property type="entry name" value="NAD(P)-bd_dom_sf"/>
</dbReference>
<dbReference type="InterPro" id="IPR028939">
    <property type="entry name" value="P5C_Rdtase_cat_N"/>
</dbReference>
<dbReference type="InterPro" id="IPR029036">
    <property type="entry name" value="P5CR_dimer"/>
</dbReference>
<dbReference type="InterPro" id="IPR000304">
    <property type="entry name" value="Pyrroline-COOH_reductase"/>
</dbReference>
<dbReference type="PANTHER" id="PTHR11645">
    <property type="entry name" value="PYRROLINE-5-CARBOXYLATE REDUCTASE"/>
    <property type="match status" value="1"/>
</dbReference>
<dbReference type="PANTHER" id="PTHR11645:SF0">
    <property type="entry name" value="PYRROLINE-5-CARBOXYLATE REDUCTASE 3"/>
    <property type="match status" value="1"/>
</dbReference>
<dbReference type="Pfam" id="PF03807">
    <property type="entry name" value="F420_oxidored"/>
    <property type="match status" value="1"/>
</dbReference>
<dbReference type="Pfam" id="PF14748">
    <property type="entry name" value="P5CR_dimer"/>
    <property type="match status" value="1"/>
</dbReference>
<dbReference type="SUPFAM" id="SSF48179">
    <property type="entry name" value="6-phosphogluconate dehydrogenase C-terminal domain-like"/>
    <property type="match status" value="1"/>
</dbReference>
<dbReference type="SUPFAM" id="SSF51735">
    <property type="entry name" value="NAD(P)-binding Rossmann-fold domains"/>
    <property type="match status" value="1"/>
</dbReference>
<reference key="1">
    <citation type="journal article" date="2005" name="Nature">
        <title>The genome of the social amoeba Dictyostelium discoideum.</title>
        <authorList>
            <person name="Eichinger L."/>
            <person name="Pachebat J.A."/>
            <person name="Gloeckner G."/>
            <person name="Rajandream M.A."/>
            <person name="Sucgang R."/>
            <person name="Berriman M."/>
            <person name="Song J."/>
            <person name="Olsen R."/>
            <person name="Szafranski K."/>
            <person name="Xu Q."/>
            <person name="Tunggal B."/>
            <person name="Kummerfeld S."/>
            <person name="Madera M."/>
            <person name="Konfortov B.A."/>
            <person name="Rivero F."/>
            <person name="Bankier A.T."/>
            <person name="Lehmann R."/>
            <person name="Hamlin N."/>
            <person name="Davies R."/>
            <person name="Gaudet P."/>
            <person name="Fey P."/>
            <person name="Pilcher K."/>
            <person name="Chen G."/>
            <person name="Saunders D."/>
            <person name="Sodergren E.J."/>
            <person name="Davis P."/>
            <person name="Kerhornou A."/>
            <person name="Nie X."/>
            <person name="Hall N."/>
            <person name="Anjard C."/>
            <person name="Hemphill L."/>
            <person name="Bason N."/>
            <person name="Farbrother P."/>
            <person name="Desany B."/>
            <person name="Just E."/>
            <person name="Morio T."/>
            <person name="Rost R."/>
            <person name="Churcher C.M."/>
            <person name="Cooper J."/>
            <person name="Haydock S."/>
            <person name="van Driessche N."/>
            <person name="Cronin A."/>
            <person name="Goodhead I."/>
            <person name="Muzny D.M."/>
            <person name="Mourier T."/>
            <person name="Pain A."/>
            <person name="Lu M."/>
            <person name="Harper D."/>
            <person name="Lindsay R."/>
            <person name="Hauser H."/>
            <person name="James K.D."/>
            <person name="Quiles M."/>
            <person name="Madan Babu M."/>
            <person name="Saito T."/>
            <person name="Buchrieser C."/>
            <person name="Wardroper A."/>
            <person name="Felder M."/>
            <person name="Thangavelu M."/>
            <person name="Johnson D."/>
            <person name="Knights A."/>
            <person name="Loulseged H."/>
            <person name="Mungall K.L."/>
            <person name="Oliver K."/>
            <person name="Price C."/>
            <person name="Quail M.A."/>
            <person name="Urushihara H."/>
            <person name="Hernandez J."/>
            <person name="Rabbinowitsch E."/>
            <person name="Steffen D."/>
            <person name="Sanders M."/>
            <person name="Ma J."/>
            <person name="Kohara Y."/>
            <person name="Sharp S."/>
            <person name="Simmonds M.N."/>
            <person name="Spiegler S."/>
            <person name="Tivey A."/>
            <person name="Sugano S."/>
            <person name="White B."/>
            <person name="Walker D."/>
            <person name="Woodward J.R."/>
            <person name="Winckler T."/>
            <person name="Tanaka Y."/>
            <person name="Shaulsky G."/>
            <person name="Schleicher M."/>
            <person name="Weinstock G.M."/>
            <person name="Rosenthal A."/>
            <person name="Cox E.C."/>
            <person name="Chisholm R.L."/>
            <person name="Gibbs R.A."/>
            <person name="Loomis W.F."/>
            <person name="Platzer M."/>
            <person name="Kay R.R."/>
            <person name="Williams J.G."/>
            <person name="Dear P.H."/>
            <person name="Noegel A.A."/>
            <person name="Barrell B.G."/>
            <person name="Kuspa A."/>
        </authorList>
    </citation>
    <scope>NUCLEOTIDE SEQUENCE [LARGE SCALE GENOMIC DNA]</scope>
    <source>
        <strain>AX4</strain>
    </source>
</reference>